<protein>
    <recommendedName>
        <fullName evidence="1">Large ribosomal subunit protein uL30</fullName>
    </recommendedName>
    <alternativeName>
        <fullName evidence="2">50S ribosomal protein L30</fullName>
    </alternativeName>
</protein>
<gene>
    <name evidence="1" type="primary">rpmD</name>
    <name type="ordered locus">FTH_0249</name>
</gene>
<keyword id="KW-0687">Ribonucleoprotein</keyword>
<keyword id="KW-0689">Ribosomal protein</keyword>
<accession>Q0BNQ9</accession>
<comment type="subunit">
    <text evidence="1">Part of the 50S ribosomal subunit.</text>
</comment>
<comment type="similarity">
    <text evidence="1">Belongs to the universal ribosomal protein uL30 family.</text>
</comment>
<feature type="chain" id="PRO_0000273787" description="Large ribosomal subunit protein uL30">
    <location>
        <begin position="1"/>
        <end position="61"/>
    </location>
</feature>
<dbReference type="EMBL" id="CP000437">
    <property type="protein sequence ID" value="ABI82275.1"/>
    <property type="molecule type" value="Genomic_DNA"/>
</dbReference>
<dbReference type="RefSeq" id="WP_003014363.1">
    <property type="nucleotide sequence ID" value="NC_017463.1"/>
</dbReference>
<dbReference type="SMR" id="Q0BNQ9"/>
<dbReference type="GeneID" id="75264243"/>
<dbReference type="KEGG" id="fth:FTH_0249"/>
<dbReference type="GO" id="GO:0022625">
    <property type="term" value="C:cytosolic large ribosomal subunit"/>
    <property type="evidence" value="ECO:0007669"/>
    <property type="project" value="TreeGrafter"/>
</dbReference>
<dbReference type="GO" id="GO:0003735">
    <property type="term" value="F:structural constituent of ribosome"/>
    <property type="evidence" value="ECO:0007669"/>
    <property type="project" value="InterPro"/>
</dbReference>
<dbReference type="GO" id="GO:0006412">
    <property type="term" value="P:translation"/>
    <property type="evidence" value="ECO:0007669"/>
    <property type="project" value="UniProtKB-UniRule"/>
</dbReference>
<dbReference type="CDD" id="cd01658">
    <property type="entry name" value="Ribosomal_L30"/>
    <property type="match status" value="1"/>
</dbReference>
<dbReference type="FunFam" id="3.30.1390.20:FF:000001">
    <property type="entry name" value="50S ribosomal protein L30"/>
    <property type="match status" value="1"/>
</dbReference>
<dbReference type="Gene3D" id="3.30.1390.20">
    <property type="entry name" value="Ribosomal protein L30, ferredoxin-like fold domain"/>
    <property type="match status" value="1"/>
</dbReference>
<dbReference type="HAMAP" id="MF_01371_B">
    <property type="entry name" value="Ribosomal_uL30_B"/>
    <property type="match status" value="1"/>
</dbReference>
<dbReference type="InterPro" id="IPR036919">
    <property type="entry name" value="Ribo_uL30_ferredoxin-like_sf"/>
</dbReference>
<dbReference type="InterPro" id="IPR005996">
    <property type="entry name" value="Ribosomal_uL30_bac-type"/>
</dbReference>
<dbReference type="InterPro" id="IPR016082">
    <property type="entry name" value="Ribosomal_uL30_ferredoxin-like"/>
</dbReference>
<dbReference type="NCBIfam" id="TIGR01308">
    <property type="entry name" value="rpmD_bact"/>
    <property type="match status" value="1"/>
</dbReference>
<dbReference type="PANTHER" id="PTHR15892:SF2">
    <property type="entry name" value="LARGE RIBOSOMAL SUBUNIT PROTEIN UL30M"/>
    <property type="match status" value="1"/>
</dbReference>
<dbReference type="PANTHER" id="PTHR15892">
    <property type="entry name" value="MITOCHONDRIAL RIBOSOMAL PROTEIN L30"/>
    <property type="match status" value="1"/>
</dbReference>
<dbReference type="Pfam" id="PF00327">
    <property type="entry name" value="Ribosomal_L30"/>
    <property type="match status" value="1"/>
</dbReference>
<dbReference type="PIRSF" id="PIRSF002211">
    <property type="entry name" value="Ribosomal_L30_bac-type"/>
    <property type="match status" value="1"/>
</dbReference>
<dbReference type="SUPFAM" id="SSF55129">
    <property type="entry name" value="Ribosomal protein L30p/L7e"/>
    <property type="match status" value="1"/>
</dbReference>
<name>RL30_FRATO</name>
<sequence length="61" mass="6871">MTQAKTFKVTLVKSLIGRKENHIASARGLGLRKINHTVEVLDTPENRGMANKIYYMVKIEG</sequence>
<organism>
    <name type="scientific">Francisella tularensis subsp. holarctica (strain OSU18)</name>
    <dbReference type="NCBI Taxonomy" id="393011"/>
    <lineage>
        <taxon>Bacteria</taxon>
        <taxon>Pseudomonadati</taxon>
        <taxon>Pseudomonadota</taxon>
        <taxon>Gammaproteobacteria</taxon>
        <taxon>Thiotrichales</taxon>
        <taxon>Francisellaceae</taxon>
        <taxon>Francisella</taxon>
    </lineage>
</organism>
<proteinExistence type="inferred from homology"/>
<reference key="1">
    <citation type="journal article" date="2006" name="J. Bacteriol.">
        <title>Chromosome rearrangement and diversification of Francisella tularensis revealed by the type B (OSU18) genome sequence.</title>
        <authorList>
            <person name="Petrosino J.F."/>
            <person name="Xiang Q."/>
            <person name="Karpathy S.E."/>
            <person name="Jiang H."/>
            <person name="Yerrapragada S."/>
            <person name="Liu Y."/>
            <person name="Gioia J."/>
            <person name="Hemphill L."/>
            <person name="Gonzalez A."/>
            <person name="Raghavan T.M."/>
            <person name="Uzman A."/>
            <person name="Fox G.E."/>
            <person name="Highlander S."/>
            <person name="Reichard M."/>
            <person name="Morton R.J."/>
            <person name="Clinkenbeard K.D."/>
            <person name="Weinstock G.M."/>
        </authorList>
    </citation>
    <scope>NUCLEOTIDE SEQUENCE [LARGE SCALE GENOMIC DNA]</scope>
    <source>
        <strain>OSU18</strain>
    </source>
</reference>
<evidence type="ECO:0000255" key="1">
    <source>
        <dbReference type="HAMAP-Rule" id="MF_01371"/>
    </source>
</evidence>
<evidence type="ECO:0000305" key="2"/>